<name>RS21_SYNP6</name>
<organism>
    <name type="scientific">Synechococcus sp. (strain ATCC 27144 / PCC 6301 / SAUG 1402/1)</name>
    <name type="common">Anacystis nidulans</name>
    <dbReference type="NCBI Taxonomy" id="269084"/>
    <lineage>
        <taxon>Bacteria</taxon>
        <taxon>Bacillati</taxon>
        <taxon>Cyanobacteriota</taxon>
        <taxon>Cyanophyceae</taxon>
        <taxon>Synechococcales</taxon>
        <taxon>Synechococcaceae</taxon>
        <taxon>Synechococcus</taxon>
    </lineage>
</organism>
<proteinExistence type="inferred from homology"/>
<gene>
    <name evidence="1" type="primary">rpsU</name>
    <name evidence="1" type="synonym">rps21</name>
    <name type="ordered locus">syc2318_c</name>
</gene>
<dbReference type="EMBL" id="AP008231">
    <property type="protein sequence ID" value="BAD80508.1"/>
    <property type="molecule type" value="Genomic_DNA"/>
</dbReference>
<dbReference type="RefSeq" id="WP_011244628.1">
    <property type="nucleotide sequence ID" value="NZ_CP085785.1"/>
</dbReference>
<dbReference type="SMR" id="Q5MZL2"/>
<dbReference type="GeneID" id="72430645"/>
<dbReference type="KEGG" id="syc:syc2318_c"/>
<dbReference type="eggNOG" id="COG0828">
    <property type="taxonomic scope" value="Bacteria"/>
</dbReference>
<dbReference type="Proteomes" id="UP000001175">
    <property type="component" value="Chromosome"/>
</dbReference>
<dbReference type="GO" id="GO:1990904">
    <property type="term" value="C:ribonucleoprotein complex"/>
    <property type="evidence" value="ECO:0007669"/>
    <property type="project" value="UniProtKB-KW"/>
</dbReference>
<dbReference type="GO" id="GO:0005840">
    <property type="term" value="C:ribosome"/>
    <property type="evidence" value="ECO:0007669"/>
    <property type="project" value="UniProtKB-KW"/>
</dbReference>
<dbReference type="GO" id="GO:0003735">
    <property type="term" value="F:structural constituent of ribosome"/>
    <property type="evidence" value="ECO:0007669"/>
    <property type="project" value="InterPro"/>
</dbReference>
<dbReference type="GO" id="GO:0006412">
    <property type="term" value="P:translation"/>
    <property type="evidence" value="ECO:0007669"/>
    <property type="project" value="UniProtKB-UniRule"/>
</dbReference>
<dbReference type="Gene3D" id="1.20.5.1150">
    <property type="entry name" value="Ribosomal protein S8"/>
    <property type="match status" value="1"/>
</dbReference>
<dbReference type="HAMAP" id="MF_00358">
    <property type="entry name" value="Ribosomal_bS21"/>
    <property type="match status" value="1"/>
</dbReference>
<dbReference type="InterPro" id="IPR001911">
    <property type="entry name" value="Ribosomal_bS21"/>
</dbReference>
<dbReference type="InterPro" id="IPR018278">
    <property type="entry name" value="Ribosomal_bS21_CS"/>
</dbReference>
<dbReference type="InterPro" id="IPR038380">
    <property type="entry name" value="Ribosomal_bS21_sf"/>
</dbReference>
<dbReference type="NCBIfam" id="TIGR00030">
    <property type="entry name" value="S21p"/>
    <property type="match status" value="1"/>
</dbReference>
<dbReference type="PANTHER" id="PTHR21109">
    <property type="entry name" value="MITOCHONDRIAL 28S RIBOSOMAL PROTEIN S21"/>
    <property type="match status" value="1"/>
</dbReference>
<dbReference type="PANTHER" id="PTHR21109:SF22">
    <property type="entry name" value="SMALL RIBOSOMAL SUBUNIT PROTEIN BS21"/>
    <property type="match status" value="1"/>
</dbReference>
<dbReference type="Pfam" id="PF01165">
    <property type="entry name" value="Ribosomal_S21"/>
    <property type="match status" value="1"/>
</dbReference>
<dbReference type="PRINTS" id="PR00976">
    <property type="entry name" value="RIBOSOMALS21"/>
</dbReference>
<dbReference type="PROSITE" id="PS01181">
    <property type="entry name" value="RIBOSOMAL_S21"/>
    <property type="match status" value="1"/>
</dbReference>
<evidence type="ECO:0000255" key="1">
    <source>
        <dbReference type="HAMAP-Rule" id="MF_00358"/>
    </source>
</evidence>
<evidence type="ECO:0000256" key="2">
    <source>
        <dbReference type="SAM" id="MobiDB-lite"/>
    </source>
</evidence>
<evidence type="ECO:0000305" key="3"/>
<keyword id="KW-0687">Ribonucleoprotein</keyword>
<keyword id="KW-0689">Ribosomal protein</keyword>
<sequence>MAEVRLGENETIESALRRFKKKIQKAGILPEVRRREHYEKPSQRRKRKLEASRRRRR</sequence>
<accession>Q5MZL2</accession>
<feature type="chain" id="PRO_0000178392" description="Small ribosomal subunit protein bS21">
    <location>
        <begin position="1"/>
        <end position="57"/>
    </location>
</feature>
<feature type="region of interest" description="Disordered" evidence="2">
    <location>
        <begin position="32"/>
        <end position="57"/>
    </location>
</feature>
<feature type="compositionally biased region" description="Basic and acidic residues" evidence="2">
    <location>
        <begin position="32"/>
        <end position="42"/>
    </location>
</feature>
<feature type="compositionally biased region" description="Basic residues" evidence="2">
    <location>
        <begin position="43"/>
        <end position="57"/>
    </location>
</feature>
<protein>
    <recommendedName>
        <fullName evidence="1">Small ribosomal subunit protein bS21</fullName>
    </recommendedName>
    <alternativeName>
        <fullName evidence="3">30S ribosomal protein S21</fullName>
    </alternativeName>
</protein>
<comment type="similarity">
    <text evidence="1">Belongs to the bacterial ribosomal protein bS21 family.</text>
</comment>
<reference key="1">
    <citation type="journal article" date="2007" name="Photosyn. Res.">
        <title>Complete nucleotide sequence of the freshwater unicellular cyanobacterium Synechococcus elongatus PCC 6301 chromosome: gene content and organization.</title>
        <authorList>
            <person name="Sugita C."/>
            <person name="Ogata K."/>
            <person name="Shikata M."/>
            <person name="Jikuya H."/>
            <person name="Takano J."/>
            <person name="Furumichi M."/>
            <person name="Kanehisa M."/>
            <person name="Omata T."/>
            <person name="Sugiura M."/>
            <person name="Sugita M."/>
        </authorList>
    </citation>
    <scope>NUCLEOTIDE SEQUENCE [LARGE SCALE GENOMIC DNA]</scope>
    <source>
        <strain>ATCC 27144 / PCC 6301 / SAUG 1402/1</strain>
    </source>
</reference>